<organism>
    <name type="scientific">Chlamydia trachomatis serovar L2 (strain ATCC VR-902B / DSM 19102 / 434/Bu)</name>
    <dbReference type="NCBI Taxonomy" id="471472"/>
    <lineage>
        <taxon>Bacteria</taxon>
        <taxon>Pseudomonadati</taxon>
        <taxon>Chlamydiota</taxon>
        <taxon>Chlamydiia</taxon>
        <taxon>Chlamydiales</taxon>
        <taxon>Chlamydiaceae</taxon>
        <taxon>Chlamydia/Chlamydophila group</taxon>
        <taxon>Chlamydia</taxon>
    </lineage>
</organism>
<comment type="function">
    <text evidence="1">Catalyzes the formation of phosphatidylethanolamine (PtdEtn) from phosphatidylserine (PtdSer).</text>
</comment>
<comment type="catalytic activity">
    <reaction evidence="1">
        <text>a 1,2-diacyl-sn-glycero-3-phospho-L-serine + H(+) = a 1,2-diacyl-sn-glycero-3-phosphoethanolamine + CO2</text>
        <dbReference type="Rhea" id="RHEA:20828"/>
        <dbReference type="ChEBI" id="CHEBI:15378"/>
        <dbReference type="ChEBI" id="CHEBI:16526"/>
        <dbReference type="ChEBI" id="CHEBI:57262"/>
        <dbReference type="ChEBI" id="CHEBI:64612"/>
        <dbReference type="EC" id="4.1.1.65"/>
    </reaction>
</comment>
<comment type="cofactor">
    <cofactor evidence="1">
        <name>pyruvate</name>
        <dbReference type="ChEBI" id="CHEBI:15361"/>
    </cofactor>
    <text evidence="1">Binds 1 pyruvoyl group covalently per subunit.</text>
</comment>
<comment type="pathway">
    <text evidence="1">Phospholipid metabolism; phosphatidylethanolamine biosynthesis; phosphatidylethanolamine from CDP-diacylglycerol: step 2/2.</text>
</comment>
<comment type="subunit">
    <text evidence="1">Heterodimer of a large membrane-associated beta subunit and a small pyruvoyl-containing alpha subunit.</text>
</comment>
<comment type="subcellular location">
    <subcellularLocation>
        <location evidence="1">Cell membrane</location>
        <topology evidence="1">Peripheral membrane protein</topology>
    </subcellularLocation>
</comment>
<comment type="PTM">
    <text evidence="1">Is synthesized initially as an inactive proenzyme. Formation of the active enzyme involves a self-maturation process in which the active site pyruvoyl group is generated from an internal serine residue via an autocatalytic post-translational modification. Two non-identical subunits are generated from the proenzyme in this reaction, and the pyruvate is formed at the N-terminus of the alpha chain, which is derived from the carboxyl end of the proenzyme. The autoendoproteolytic cleavage occurs by a canonical serine protease mechanism, in which the side chain hydroxyl group of the serine supplies its oxygen atom to form the C-terminus of the beta chain, while the remainder of the serine residue undergoes an oxidative deamination to produce ammonia and the pyruvoyl prosthetic group on the alpha chain. During this reaction, the Ser that is part of the protease active site of the proenzyme becomes the pyruvoyl prosthetic group, which constitutes an essential element of the active site of the mature decarboxylase.</text>
</comment>
<comment type="similarity">
    <text evidence="1">Belongs to the phosphatidylserine decarboxylase family. PSD-B subfamily. Prokaryotic type II sub-subfamily.</text>
</comment>
<proteinExistence type="inferred from homology"/>
<sequence length="301" mass="34076">MAAREMLYVNRETGKVEQERIICSSLVKFFIETRIGRALYSVLCKNSLFSRIVGWCQRLRVTRYFIKPFVTKYRICIEESASPLHDYASFNDFFVRKLKPDARPICQGEDICVTPADGAYLVFPSMADLSLFTIKNKPFSLESFLGDPQLAHQYAQGSMAIARLAPFDYHRFHFPIAGIAEAPRRINGHLFSIHPLMLKRNFEVFTENKREITIITSKEFGEVAYVEVGALNVGSIHQTFSPGSYVKKGAEKGFFAFGGSTVVLLFQPQRIIFDADLVGYSAQGLETRCRMGQSLGKRFSS</sequence>
<keyword id="KW-1003">Cell membrane</keyword>
<keyword id="KW-0210">Decarboxylase</keyword>
<keyword id="KW-0444">Lipid biosynthesis</keyword>
<keyword id="KW-0443">Lipid metabolism</keyword>
<keyword id="KW-0456">Lyase</keyword>
<keyword id="KW-0472">Membrane</keyword>
<keyword id="KW-0594">Phospholipid biosynthesis</keyword>
<keyword id="KW-1208">Phospholipid metabolism</keyword>
<keyword id="KW-0670">Pyruvate</keyword>
<keyword id="KW-0865">Zymogen</keyword>
<evidence type="ECO:0000255" key="1">
    <source>
        <dbReference type="HAMAP-Rule" id="MF_00663"/>
    </source>
</evidence>
<evidence type="ECO:0000305" key="2"/>
<name>PSD_CHLT2</name>
<feature type="chain" id="PRO_1000131428" description="Phosphatidylserine decarboxylase beta chain" evidence="1">
    <location>
        <begin position="1"/>
        <end position="259"/>
    </location>
</feature>
<feature type="chain" id="PRO_1000131429" description="Phosphatidylserine decarboxylase alpha chain" evidence="1">
    <location>
        <begin position="260"/>
        <end position="301"/>
    </location>
</feature>
<feature type="active site" description="Charge relay system; for autoendoproteolytic cleavage activity" evidence="1">
    <location>
        <position position="117"/>
    </location>
</feature>
<feature type="active site" description="Charge relay system; for autoendoproteolytic cleavage activity" evidence="1">
    <location>
        <position position="173"/>
    </location>
</feature>
<feature type="active site" description="Charge relay system; for autoendoproteolytic cleavage activity" evidence="1">
    <location>
        <position position="260"/>
    </location>
</feature>
<feature type="active site" description="Schiff-base intermediate with substrate; via pyruvic acid; for decarboxylase activity" evidence="1">
    <location>
        <position position="260"/>
    </location>
</feature>
<feature type="site" description="Cleavage (non-hydrolytic); by autocatalysis" evidence="1">
    <location>
        <begin position="259"/>
        <end position="260"/>
    </location>
</feature>
<feature type="modified residue" description="Pyruvic acid (Ser); by autocatalysis" evidence="1">
    <location>
        <position position="260"/>
    </location>
</feature>
<feature type="sequence conflict" description="In Ref. 1; AAB17564." evidence="2" ref="1">
    <original>P</original>
    <variation>S</variation>
    <location>
        <position position="83"/>
    </location>
</feature>
<feature type="sequence conflict" description="In Ref. 1; AAB17564." evidence="2" ref="1">
    <original>E</original>
    <variation>K</variation>
    <location>
        <position position="219"/>
    </location>
</feature>
<feature type="sequence conflict" description="In Ref. 1; AAB17564." evidence="2" ref="1">
    <original>E</original>
    <variation>K</variation>
    <location>
        <position position="251"/>
    </location>
</feature>
<gene>
    <name evidence="1" type="primary">psd</name>
    <name type="ordered locus">CTL0068</name>
</gene>
<reference key="1">
    <citation type="submission" date="1996-09" db="EMBL/GenBank/DDBJ databases">
        <title>Cloning, sequencing and expression of the gene encoding phosphatidylserine decarboxylase from Chlamydia trachomatis.</title>
        <authorList>
            <person name="McClarty G.A."/>
        </authorList>
    </citation>
    <scope>NUCLEOTIDE SEQUENCE [GENOMIC DNA]</scope>
</reference>
<reference key="2">
    <citation type="journal article" date="2008" name="Genome Res.">
        <title>Chlamydia trachomatis: genome sequence analysis of lymphogranuloma venereum isolates.</title>
        <authorList>
            <person name="Thomson N.R."/>
            <person name="Holden M.T.G."/>
            <person name="Carder C."/>
            <person name="Lennard N."/>
            <person name="Lockey S.J."/>
            <person name="Marsh P."/>
            <person name="Skipp P."/>
            <person name="O'Connor C.D."/>
            <person name="Goodhead I."/>
            <person name="Norbertzcak H."/>
            <person name="Harris B."/>
            <person name="Ormond D."/>
            <person name="Rance R."/>
            <person name="Quail M.A."/>
            <person name="Parkhill J."/>
            <person name="Stephens R.S."/>
            <person name="Clarke I.N."/>
        </authorList>
    </citation>
    <scope>NUCLEOTIDE SEQUENCE [LARGE SCALE GENOMIC DNA]</scope>
    <source>
        <strain>ATCC VR-902B / DSM 19102 / 434/Bu</strain>
    </source>
</reference>
<accession>B0B8S5</accession>
<accession>O84705</accession>
<accession>P77850</accession>
<protein>
    <recommendedName>
        <fullName evidence="1">Phosphatidylserine decarboxylase proenzyme</fullName>
        <ecNumber evidence="1">4.1.1.65</ecNumber>
    </recommendedName>
    <component>
        <recommendedName>
            <fullName evidence="1">Phosphatidylserine decarboxylase alpha chain</fullName>
        </recommendedName>
    </component>
    <component>
        <recommendedName>
            <fullName evidence="1">Phosphatidylserine decarboxylase beta chain</fullName>
        </recommendedName>
    </component>
</protein>
<dbReference type="EC" id="4.1.1.65" evidence="1"/>
<dbReference type="EMBL" id="U72715">
    <property type="protein sequence ID" value="AAB17564.1"/>
    <property type="molecule type" value="Genomic_DNA"/>
</dbReference>
<dbReference type="EMBL" id="AM884176">
    <property type="protein sequence ID" value="CAP03512.1"/>
    <property type="molecule type" value="Genomic_DNA"/>
</dbReference>
<dbReference type="RefSeq" id="WP_009873305.1">
    <property type="nucleotide sequence ID" value="NC_010287.1"/>
</dbReference>
<dbReference type="RefSeq" id="YP_001654159.1">
    <property type="nucleotide sequence ID" value="NC_010287.1"/>
</dbReference>
<dbReference type="SMR" id="B0B8S5"/>
<dbReference type="KEGG" id="ctb:CTL0068"/>
<dbReference type="PATRIC" id="fig|471472.4.peg.73"/>
<dbReference type="HOGENOM" id="CLU_029061_2_2_0"/>
<dbReference type="UniPathway" id="UPA00558">
    <property type="reaction ID" value="UER00616"/>
</dbReference>
<dbReference type="Proteomes" id="UP001154402">
    <property type="component" value="Chromosome"/>
</dbReference>
<dbReference type="GO" id="GO:0005886">
    <property type="term" value="C:plasma membrane"/>
    <property type="evidence" value="ECO:0007669"/>
    <property type="project" value="UniProtKB-SubCell"/>
</dbReference>
<dbReference type="GO" id="GO:0004609">
    <property type="term" value="F:phosphatidylserine decarboxylase activity"/>
    <property type="evidence" value="ECO:0007669"/>
    <property type="project" value="UniProtKB-UniRule"/>
</dbReference>
<dbReference type="GO" id="GO:0006646">
    <property type="term" value="P:phosphatidylethanolamine biosynthetic process"/>
    <property type="evidence" value="ECO:0007669"/>
    <property type="project" value="UniProtKB-UniRule"/>
</dbReference>
<dbReference type="HAMAP" id="MF_00663">
    <property type="entry name" value="PS_decarb_PSD_B_type2"/>
    <property type="match status" value="1"/>
</dbReference>
<dbReference type="InterPro" id="IPR003817">
    <property type="entry name" value="PS_Dcarbxylase"/>
</dbReference>
<dbReference type="InterPro" id="IPR033177">
    <property type="entry name" value="PSD-B"/>
</dbReference>
<dbReference type="InterPro" id="IPR033179">
    <property type="entry name" value="PSD_type2_pro"/>
</dbReference>
<dbReference type="NCBIfam" id="NF001941">
    <property type="entry name" value="PRK00723.1"/>
    <property type="match status" value="1"/>
</dbReference>
<dbReference type="NCBIfam" id="TIGR00163">
    <property type="entry name" value="PS_decarb"/>
    <property type="match status" value="1"/>
</dbReference>
<dbReference type="PANTHER" id="PTHR10067">
    <property type="entry name" value="PHOSPHATIDYLSERINE DECARBOXYLASE"/>
    <property type="match status" value="1"/>
</dbReference>
<dbReference type="PANTHER" id="PTHR10067:SF17">
    <property type="entry name" value="PHOSPHATIDYLSERINE DECARBOXYLASE PROENZYME 2"/>
    <property type="match status" value="1"/>
</dbReference>
<dbReference type="Pfam" id="PF02666">
    <property type="entry name" value="PS_Dcarbxylase"/>
    <property type="match status" value="1"/>
</dbReference>